<sequence>MNTFGTRLKFTSFGESHGVAVGCIIDGMPAGVKFDEEFLQNELDKRKGGSKFATPRKESDKAQVLSGVFEGYTTGHPIAIVVFNENAHSKDYDNLKDLFRPAHADFTYFYKYGIRDHRGGGRSSARESVARVAGGAVAAMLLCEFGICVQSGVFGIGTFVSNLKEEEFDFEFAKKSEIFCLDPKLESDFKNEILNARNSKDSVGAAVFTKVSGMLVGLGEVLYDKLDSKLAHALMGVNAVKAVEIGEGINASKMRGSCNNDALKDGKFLSNHSGGILGGISNGENLILKTYFKPTPSIFAKQESIDKFGNNLEFELKGRHDPCVGVRGSVVANAMVRLVLADCLLLNASANLNNLKNAYGLK</sequence>
<proteinExistence type="inferred from homology"/>
<reference key="1">
    <citation type="submission" date="2006-12" db="EMBL/GenBank/DDBJ databases">
        <authorList>
            <person name="Fouts D.E."/>
            <person name="Nelson K.E."/>
            <person name="Sebastian Y."/>
        </authorList>
    </citation>
    <scope>NUCLEOTIDE SEQUENCE [LARGE SCALE GENOMIC DNA]</scope>
    <source>
        <strain>81-176</strain>
    </source>
</reference>
<organism>
    <name type="scientific">Campylobacter jejuni subsp. jejuni serotype O:23/36 (strain 81-176)</name>
    <dbReference type="NCBI Taxonomy" id="354242"/>
    <lineage>
        <taxon>Bacteria</taxon>
        <taxon>Pseudomonadati</taxon>
        <taxon>Campylobacterota</taxon>
        <taxon>Epsilonproteobacteria</taxon>
        <taxon>Campylobacterales</taxon>
        <taxon>Campylobacteraceae</taxon>
        <taxon>Campylobacter</taxon>
    </lineage>
</organism>
<gene>
    <name evidence="1" type="primary">aroC</name>
    <name type="ordered locus">CJJ81176_1625</name>
</gene>
<accession>A1W1N6</accession>
<dbReference type="EC" id="4.2.3.5" evidence="1"/>
<dbReference type="EMBL" id="CP000538">
    <property type="protein sequence ID" value="EAQ72699.1"/>
    <property type="molecule type" value="Genomic_DNA"/>
</dbReference>
<dbReference type="RefSeq" id="WP_002856130.1">
    <property type="nucleotide sequence ID" value="NC_008787.1"/>
</dbReference>
<dbReference type="SMR" id="A1W1N6"/>
<dbReference type="KEGG" id="cjj:CJJ81176_1625"/>
<dbReference type="eggNOG" id="COG0082">
    <property type="taxonomic scope" value="Bacteria"/>
</dbReference>
<dbReference type="HOGENOM" id="CLU_034547_0_2_7"/>
<dbReference type="UniPathway" id="UPA00053">
    <property type="reaction ID" value="UER00090"/>
</dbReference>
<dbReference type="Proteomes" id="UP000000646">
    <property type="component" value="Chromosome"/>
</dbReference>
<dbReference type="GO" id="GO:0005829">
    <property type="term" value="C:cytosol"/>
    <property type="evidence" value="ECO:0007669"/>
    <property type="project" value="TreeGrafter"/>
</dbReference>
<dbReference type="GO" id="GO:0004107">
    <property type="term" value="F:chorismate synthase activity"/>
    <property type="evidence" value="ECO:0007669"/>
    <property type="project" value="UniProtKB-UniRule"/>
</dbReference>
<dbReference type="GO" id="GO:0010181">
    <property type="term" value="F:FMN binding"/>
    <property type="evidence" value="ECO:0007669"/>
    <property type="project" value="TreeGrafter"/>
</dbReference>
<dbReference type="GO" id="GO:0008652">
    <property type="term" value="P:amino acid biosynthetic process"/>
    <property type="evidence" value="ECO:0007669"/>
    <property type="project" value="UniProtKB-KW"/>
</dbReference>
<dbReference type="GO" id="GO:0009073">
    <property type="term" value="P:aromatic amino acid family biosynthetic process"/>
    <property type="evidence" value="ECO:0007669"/>
    <property type="project" value="UniProtKB-KW"/>
</dbReference>
<dbReference type="GO" id="GO:0009423">
    <property type="term" value="P:chorismate biosynthetic process"/>
    <property type="evidence" value="ECO:0007669"/>
    <property type="project" value="UniProtKB-UniRule"/>
</dbReference>
<dbReference type="CDD" id="cd07304">
    <property type="entry name" value="Chorismate_synthase"/>
    <property type="match status" value="1"/>
</dbReference>
<dbReference type="Gene3D" id="3.60.150.10">
    <property type="entry name" value="Chorismate synthase AroC"/>
    <property type="match status" value="1"/>
</dbReference>
<dbReference type="HAMAP" id="MF_00300">
    <property type="entry name" value="Chorismate_synth"/>
    <property type="match status" value="1"/>
</dbReference>
<dbReference type="InterPro" id="IPR000453">
    <property type="entry name" value="Chorismate_synth"/>
</dbReference>
<dbReference type="InterPro" id="IPR035904">
    <property type="entry name" value="Chorismate_synth_AroC_sf"/>
</dbReference>
<dbReference type="InterPro" id="IPR020541">
    <property type="entry name" value="Chorismate_synthase_CS"/>
</dbReference>
<dbReference type="NCBIfam" id="TIGR00033">
    <property type="entry name" value="aroC"/>
    <property type="match status" value="1"/>
</dbReference>
<dbReference type="NCBIfam" id="NF003793">
    <property type="entry name" value="PRK05382.1"/>
    <property type="match status" value="1"/>
</dbReference>
<dbReference type="PANTHER" id="PTHR21085">
    <property type="entry name" value="CHORISMATE SYNTHASE"/>
    <property type="match status" value="1"/>
</dbReference>
<dbReference type="PANTHER" id="PTHR21085:SF0">
    <property type="entry name" value="CHORISMATE SYNTHASE"/>
    <property type="match status" value="1"/>
</dbReference>
<dbReference type="Pfam" id="PF01264">
    <property type="entry name" value="Chorismate_synt"/>
    <property type="match status" value="1"/>
</dbReference>
<dbReference type="PIRSF" id="PIRSF001456">
    <property type="entry name" value="Chorismate_synth"/>
    <property type="match status" value="1"/>
</dbReference>
<dbReference type="SUPFAM" id="SSF103263">
    <property type="entry name" value="Chorismate synthase, AroC"/>
    <property type="match status" value="1"/>
</dbReference>
<dbReference type="PROSITE" id="PS00787">
    <property type="entry name" value="CHORISMATE_SYNTHASE_1"/>
    <property type="match status" value="1"/>
</dbReference>
<dbReference type="PROSITE" id="PS00788">
    <property type="entry name" value="CHORISMATE_SYNTHASE_2"/>
    <property type="match status" value="1"/>
</dbReference>
<comment type="function">
    <text evidence="1">Catalyzes the anti-1,4-elimination of the C-3 phosphate and the C-6 proR hydrogen from 5-enolpyruvylshikimate-3-phosphate (EPSP) to yield chorismate, which is the branch point compound that serves as the starting substrate for the three terminal pathways of aromatic amino acid biosynthesis. This reaction introduces a second double bond into the aromatic ring system.</text>
</comment>
<comment type="catalytic activity">
    <reaction evidence="1">
        <text>5-O-(1-carboxyvinyl)-3-phosphoshikimate = chorismate + phosphate</text>
        <dbReference type="Rhea" id="RHEA:21020"/>
        <dbReference type="ChEBI" id="CHEBI:29748"/>
        <dbReference type="ChEBI" id="CHEBI:43474"/>
        <dbReference type="ChEBI" id="CHEBI:57701"/>
        <dbReference type="EC" id="4.2.3.5"/>
    </reaction>
</comment>
<comment type="cofactor">
    <cofactor evidence="1">
        <name>FMNH2</name>
        <dbReference type="ChEBI" id="CHEBI:57618"/>
    </cofactor>
    <text evidence="1">Reduced FMN (FMNH(2)).</text>
</comment>
<comment type="pathway">
    <text evidence="1">Metabolic intermediate biosynthesis; chorismate biosynthesis; chorismate from D-erythrose 4-phosphate and phosphoenolpyruvate: step 7/7.</text>
</comment>
<comment type="subunit">
    <text evidence="1">Homotetramer.</text>
</comment>
<comment type="similarity">
    <text evidence="1">Belongs to the chorismate synthase family.</text>
</comment>
<keyword id="KW-0028">Amino-acid biosynthesis</keyword>
<keyword id="KW-0057">Aromatic amino acid biosynthesis</keyword>
<keyword id="KW-0274">FAD</keyword>
<keyword id="KW-0285">Flavoprotein</keyword>
<keyword id="KW-0288">FMN</keyword>
<keyword id="KW-0456">Lyase</keyword>
<keyword id="KW-0521">NADP</keyword>
<protein>
    <recommendedName>
        <fullName evidence="1">Chorismate synthase</fullName>
        <shortName evidence="1">CS</shortName>
        <ecNumber evidence="1">4.2.3.5</ecNumber>
    </recommendedName>
    <alternativeName>
        <fullName evidence="1">5-enolpyruvylshikimate-3-phosphate phospholyase</fullName>
    </alternativeName>
</protein>
<name>AROC_CAMJJ</name>
<feature type="chain" id="PRO_1000022475" description="Chorismate synthase">
    <location>
        <begin position="1"/>
        <end position="362"/>
    </location>
</feature>
<feature type="binding site" evidence="1">
    <location>
        <position position="46"/>
    </location>
    <ligand>
        <name>NADP(+)</name>
        <dbReference type="ChEBI" id="CHEBI:58349"/>
    </ligand>
</feature>
<feature type="binding site" evidence="1">
    <location>
        <begin position="122"/>
        <end position="124"/>
    </location>
    <ligand>
        <name>FMN</name>
        <dbReference type="ChEBI" id="CHEBI:58210"/>
    </ligand>
</feature>
<feature type="binding site" evidence="1">
    <location>
        <begin position="238"/>
        <end position="239"/>
    </location>
    <ligand>
        <name>FMN</name>
        <dbReference type="ChEBI" id="CHEBI:58210"/>
    </ligand>
</feature>
<feature type="binding site" evidence="1">
    <location>
        <position position="278"/>
    </location>
    <ligand>
        <name>FMN</name>
        <dbReference type="ChEBI" id="CHEBI:58210"/>
    </ligand>
</feature>
<feature type="binding site" evidence="1">
    <location>
        <begin position="293"/>
        <end position="297"/>
    </location>
    <ligand>
        <name>FMN</name>
        <dbReference type="ChEBI" id="CHEBI:58210"/>
    </ligand>
</feature>
<feature type="binding site" evidence="1">
    <location>
        <position position="319"/>
    </location>
    <ligand>
        <name>FMN</name>
        <dbReference type="ChEBI" id="CHEBI:58210"/>
    </ligand>
</feature>
<evidence type="ECO:0000255" key="1">
    <source>
        <dbReference type="HAMAP-Rule" id="MF_00300"/>
    </source>
</evidence>